<reference key="1">
    <citation type="journal article" date="1997" name="J. Bacteriol.">
        <title>Complete genome sequence of Methanobacterium thermoautotrophicum deltaH: functional analysis and comparative genomics.</title>
        <authorList>
            <person name="Smith D.R."/>
            <person name="Doucette-Stamm L.A."/>
            <person name="Deloughery C."/>
            <person name="Lee H.-M."/>
            <person name="Dubois J."/>
            <person name="Aldredge T."/>
            <person name="Bashirzadeh R."/>
            <person name="Blakely D."/>
            <person name="Cook R."/>
            <person name="Gilbert K."/>
            <person name="Harrison D."/>
            <person name="Hoang L."/>
            <person name="Keagle P."/>
            <person name="Lumm W."/>
            <person name="Pothier B."/>
            <person name="Qiu D."/>
            <person name="Spadafora R."/>
            <person name="Vicare R."/>
            <person name="Wang Y."/>
            <person name="Wierzbowski J."/>
            <person name="Gibson R."/>
            <person name="Jiwani N."/>
            <person name="Caruso A."/>
            <person name="Bush D."/>
            <person name="Safer H."/>
            <person name="Patwell D."/>
            <person name="Prabhakar S."/>
            <person name="McDougall S."/>
            <person name="Shimer G."/>
            <person name="Goyal A."/>
            <person name="Pietrovski S."/>
            <person name="Church G.M."/>
            <person name="Daniels C.J."/>
            <person name="Mao J.-I."/>
            <person name="Rice P."/>
            <person name="Noelling J."/>
            <person name="Reeve J.N."/>
        </authorList>
    </citation>
    <scope>NUCLEOTIDE SEQUENCE [LARGE SCALE GENOMIC DNA]</scope>
    <source>
        <strain>ATCC 29096 / DSM 1053 / JCM 10044 / NBRC 100330 / Delta H</strain>
    </source>
</reference>
<gene>
    <name evidence="1" type="primary">mtrA2</name>
    <name type="ordered locus">MTH_1062</name>
</gene>
<accession>O27134</accession>
<evidence type="ECO:0000255" key="1">
    <source>
        <dbReference type="HAMAP-Rule" id="MF_01093"/>
    </source>
</evidence>
<sequence>MFLMVEKKPVPEDWPHIVGDYVVGDEESPVAVVTLGSHMEDEPVKAGAAISGPLHTENLGIEKVVGNVIANPNLRFLVVCGAEVMGHITGQTMKALHSNGVDLETGRIIGATGAIPYIENMPEEAIERFRRQVELVDMVDVEDPDSIAARIQECVVHDSGAMEEEPLILKVPEIGKGDSEENT</sequence>
<name>MTRA2_METTH</name>
<comment type="function">
    <text evidence="1">Part of a complex that catalyzes the formation of methyl-coenzyme M and tetrahydromethanopterin from coenzyme M and methyl-tetrahydromethanopterin. This is an energy-conserving, sodium-ion translocating step.</text>
</comment>
<comment type="catalytic activity">
    <reaction evidence="1">
        <text>5-methyl-5,6,7,8-tetrahydromethanopterin + coenzyme M + 2 Na(+)(in) = 5,6,7,8-tetrahydromethanopterin + methyl-coenzyme M + 2 Na(+)(out)</text>
        <dbReference type="Rhea" id="RHEA:53492"/>
        <dbReference type="ChEBI" id="CHEBI:29101"/>
        <dbReference type="ChEBI" id="CHEBI:58103"/>
        <dbReference type="ChEBI" id="CHEBI:58116"/>
        <dbReference type="ChEBI" id="CHEBI:58286"/>
        <dbReference type="ChEBI" id="CHEBI:58319"/>
        <dbReference type="EC" id="7.2.1.4"/>
    </reaction>
</comment>
<comment type="cofactor">
    <cofactor evidence="1">
        <name>5-hydroxybenzimidazolylcob(I)amide</name>
        <dbReference type="ChEBI" id="CHEBI:60494"/>
    </cofactor>
    <text evidence="1">Binds 1 5-hydroxybenzimidazolylcobamide group.</text>
</comment>
<comment type="pathway">
    <text evidence="1">One-carbon metabolism; methanogenesis from CO(2); methyl-coenzyme M from 5,10-methylene-5,6,7,8-tetrahydromethanopterin: step 2/2.</text>
</comment>
<comment type="subunit">
    <text evidence="1">The complex is composed of 8 subunits; MtrA, MtrB, MtrC, MtrD, MtrE, MtrF, MtrG and MtrH.</text>
</comment>
<comment type="subcellular location">
    <subcellularLocation>
        <location evidence="1">Cell membrane</location>
        <topology evidence="1">Single-pass membrane protein</topology>
    </subcellularLocation>
</comment>
<comment type="similarity">
    <text evidence="1">Belongs to the MtrA family.</text>
</comment>
<organism>
    <name type="scientific">Methanothermobacter thermautotrophicus (strain ATCC 29096 / DSM 1053 / JCM 10044 / NBRC 100330 / Delta H)</name>
    <name type="common">Methanobacterium thermoautotrophicum</name>
    <dbReference type="NCBI Taxonomy" id="187420"/>
    <lineage>
        <taxon>Archaea</taxon>
        <taxon>Methanobacteriati</taxon>
        <taxon>Methanobacteriota</taxon>
        <taxon>Methanomada group</taxon>
        <taxon>Methanobacteria</taxon>
        <taxon>Methanobacteriales</taxon>
        <taxon>Methanobacteriaceae</taxon>
        <taxon>Methanothermobacter</taxon>
    </lineage>
</organism>
<proteinExistence type="inferred from homology"/>
<protein>
    <recommendedName>
        <fullName evidence="1">Tetrahydromethanopterin S-methyltransferase subunit A 2</fullName>
        <ecNumber evidence="1">7.2.1.4</ecNumber>
    </recommendedName>
    <alternativeName>
        <fullName evidence="1">N5-methyltetrahydromethanopterin--coenzyme M methyltransferase subunit A 2</fullName>
    </alternativeName>
</protein>
<feature type="chain" id="PRO_0000403058" description="Tetrahydromethanopterin S-methyltransferase subunit A 2">
    <location>
        <begin position="1"/>
        <end position="183"/>
    </location>
</feature>
<feature type="topological domain" description="Cytoplasmic" evidence="1">
    <location>
        <begin position="1"/>
        <end position="101"/>
    </location>
</feature>
<feature type="transmembrane region" description="Helical" evidence="1">
    <location>
        <begin position="102"/>
        <end position="118"/>
    </location>
</feature>
<feature type="topological domain" description="Extracellular" evidence="1">
    <location>
        <begin position="119"/>
        <end position="183"/>
    </location>
</feature>
<feature type="binding site" evidence="1">
    <location>
        <position position="87"/>
    </location>
    <ligand>
        <name>5-hydroxybenzimidazolylcob(I)amide</name>
        <dbReference type="ChEBI" id="CHEBI:60494"/>
        <note>cofactor</note>
    </ligand>
</feature>
<keyword id="KW-1003">Cell membrane</keyword>
<keyword id="KW-0170">Cobalt</keyword>
<keyword id="KW-0472">Membrane</keyword>
<keyword id="KW-0484">Methanogenesis</keyword>
<keyword id="KW-0489">Methyltransferase</keyword>
<keyword id="KW-0554">One-carbon metabolism</keyword>
<keyword id="KW-1185">Reference proteome</keyword>
<keyword id="KW-0808">Transferase</keyword>
<keyword id="KW-1278">Translocase</keyword>
<keyword id="KW-0812">Transmembrane</keyword>
<keyword id="KW-1133">Transmembrane helix</keyword>
<dbReference type="EC" id="7.2.1.4" evidence="1"/>
<dbReference type="EMBL" id="AE000666">
    <property type="protein sequence ID" value="AAB85551.1"/>
    <property type="molecule type" value="Genomic_DNA"/>
</dbReference>
<dbReference type="PIR" id="A69008">
    <property type="entry name" value="A69008"/>
</dbReference>
<dbReference type="SMR" id="O27134"/>
<dbReference type="STRING" id="187420.MTH_1062"/>
<dbReference type="PaxDb" id="187420-MTH_1062"/>
<dbReference type="EnsemblBacteria" id="AAB85551">
    <property type="protein sequence ID" value="AAB85551"/>
    <property type="gene ID" value="MTH_1062"/>
</dbReference>
<dbReference type="KEGG" id="mth:MTH_1062"/>
<dbReference type="HOGENOM" id="CLU_100863_0_0_2"/>
<dbReference type="InParanoid" id="O27134"/>
<dbReference type="UniPathway" id="UPA00640">
    <property type="reaction ID" value="UER00698"/>
</dbReference>
<dbReference type="Proteomes" id="UP000005223">
    <property type="component" value="Chromosome"/>
</dbReference>
<dbReference type="GO" id="GO:0005886">
    <property type="term" value="C:plasma membrane"/>
    <property type="evidence" value="ECO:0007669"/>
    <property type="project" value="UniProtKB-SubCell"/>
</dbReference>
<dbReference type="GO" id="GO:0050897">
    <property type="term" value="F:cobalt ion binding"/>
    <property type="evidence" value="ECO:0007669"/>
    <property type="project" value="InterPro"/>
</dbReference>
<dbReference type="GO" id="GO:0030269">
    <property type="term" value="F:tetrahydromethanopterin S-methyltransferase activity"/>
    <property type="evidence" value="ECO:0007669"/>
    <property type="project" value="UniProtKB-UniRule"/>
</dbReference>
<dbReference type="GO" id="GO:0019386">
    <property type="term" value="P:methanogenesis, from carbon dioxide"/>
    <property type="evidence" value="ECO:0007669"/>
    <property type="project" value="UniProtKB-UniRule"/>
</dbReference>
<dbReference type="GO" id="GO:0032259">
    <property type="term" value="P:methylation"/>
    <property type="evidence" value="ECO:0007669"/>
    <property type="project" value="UniProtKB-KW"/>
</dbReference>
<dbReference type="GO" id="GO:0006730">
    <property type="term" value="P:one-carbon metabolic process"/>
    <property type="evidence" value="ECO:0007669"/>
    <property type="project" value="UniProtKB-UniRule"/>
</dbReference>
<dbReference type="HAMAP" id="MF_01093">
    <property type="entry name" value="MtrA"/>
    <property type="match status" value="1"/>
</dbReference>
<dbReference type="InterPro" id="IPR030688">
    <property type="entry name" value="MeTrfase_MtrA/MtxA"/>
</dbReference>
<dbReference type="InterPro" id="IPR005778">
    <property type="entry name" value="MtrA"/>
</dbReference>
<dbReference type="NCBIfam" id="TIGR01111">
    <property type="entry name" value="mtrA"/>
    <property type="match status" value="1"/>
</dbReference>
<dbReference type="NCBIfam" id="NF002126">
    <property type="entry name" value="PRK00964.1-4"/>
    <property type="match status" value="1"/>
</dbReference>
<dbReference type="Pfam" id="PF04208">
    <property type="entry name" value="MtrA"/>
    <property type="match status" value="1"/>
</dbReference>
<dbReference type="PIRSF" id="PIRSF500207">
    <property type="entry name" value="MtrA"/>
    <property type="match status" value="1"/>
</dbReference>
<dbReference type="PIRSF" id="PIRSF009452">
    <property type="entry name" value="MtrA_MtxA"/>
    <property type="match status" value="1"/>
</dbReference>